<organism>
    <name type="scientific">Thermotoga neapolitana</name>
    <dbReference type="NCBI Taxonomy" id="2337"/>
    <lineage>
        <taxon>Bacteria</taxon>
        <taxon>Thermotogati</taxon>
        <taxon>Thermotogota</taxon>
        <taxon>Thermotogae</taxon>
        <taxon>Thermotogales</taxon>
        <taxon>Thermotogaceae</taxon>
        <taxon>Thermotoga</taxon>
    </lineage>
</organism>
<accession>P0C946</accession>
<accession>O33843</accession>
<accession>O52505</accession>
<dbReference type="EC" id="3.2.1.74" evidence="1"/>
<dbReference type="EC" id="3.2.1.21" evidence="1"/>
<dbReference type="EMBL" id="Z97212">
    <property type="protein sequence ID" value="CAB10165.1"/>
    <property type="molecule type" value="Genomic_DNA"/>
</dbReference>
<dbReference type="SMR" id="P0C946"/>
<dbReference type="UniPathway" id="UPA00350"/>
<dbReference type="UniPathway" id="UPA00696"/>
<dbReference type="GO" id="GO:0005829">
    <property type="term" value="C:cytosol"/>
    <property type="evidence" value="ECO:0007669"/>
    <property type="project" value="TreeGrafter"/>
</dbReference>
<dbReference type="GO" id="GO:0031217">
    <property type="term" value="F:glucan 1,4-beta-glucosidase activity"/>
    <property type="evidence" value="ECO:0007669"/>
    <property type="project" value="UniProtKB-EC"/>
</dbReference>
<dbReference type="GO" id="GO:0030245">
    <property type="term" value="P:cellulose catabolic process"/>
    <property type="evidence" value="ECO:0007669"/>
    <property type="project" value="UniProtKB-UniPathway"/>
</dbReference>
<dbReference type="FunFam" id="3.20.20.80:FF:000004">
    <property type="entry name" value="Beta-glucosidase 6-phospho-beta-glucosidase"/>
    <property type="match status" value="1"/>
</dbReference>
<dbReference type="Gene3D" id="3.20.20.80">
    <property type="entry name" value="Glycosidases"/>
    <property type="match status" value="1"/>
</dbReference>
<dbReference type="InterPro" id="IPR001360">
    <property type="entry name" value="Glyco_hydro_1"/>
</dbReference>
<dbReference type="InterPro" id="IPR018120">
    <property type="entry name" value="Glyco_hydro_1_AS"/>
</dbReference>
<dbReference type="InterPro" id="IPR017736">
    <property type="entry name" value="Glyco_hydro_1_beta-glucosidase"/>
</dbReference>
<dbReference type="InterPro" id="IPR033132">
    <property type="entry name" value="Glyco_hydro_1_N_CS"/>
</dbReference>
<dbReference type="InterPro" id="IPR017853">
    <property type="entry name" value="Glycoside_hydrolase_SF"/>
</dbReference>
<dbReference type="NCBIfam" id="TIGR03356">
    <property type="entry name" value="BGL"/>
    <property type="match status" value="1"/>
</dbReference>
<dbReference type="PANTHER" id="PTHR10353">
    <property type="entry name" value="GLYCOSYL HYDROLASE"/>
    <property type="match status" value="1"/>
</dbReference>
<dbReference type="PANTHER" id="PTHR10353:SF36">
    <property type="entry name" value="LP05116P"/>
    <property type="match status" value="1"/>
</dbReference>
<dbReference type="Pfam" id="PF00232">
    <property type="entry name" value="Glyco_hydro_1"/>
    <property type="match status" value="1"/>
</dbReference>
<dbReference type="PRINTS" id="PR00131">
    <property type="entry name" value="GLHYDRLASE1"/>
</dbReference>
<dbReference type="SUPFAM" id="SSF51445">
    <property type="entry name" value="(Trans)glycosidases"/>
    <property type="match status" value="1"/>
</dbReference>
<dbReference type="PROSITE" id="PS00572">
    <property type="entry name" value="GLYCOSYL_HYDROL_F1_1"/>
    <property type="match status" value="1"/>
</dbReference>
<dbReference type="PROSITE" id="PS00653">
    <property type="entry name" value="GLYCOSYL_HYDROL_F1_2"/>
    <property type="match status" value="1"/>
</dbReference>
<sequence length="425" mass="49366">MKKFPEGFLWGVATASYQIEGSPLADGAGMSIWHTFSHTPGNVKNGDTGDVACDHYNRWKEDIEIIEKIGAKAYRFSISWPRILPEGTGKVNQKGLDFYNRIIDTLLEKNITPFITIYHWDLPFSLQLKGGWANRDIADWFAEYSRVLFENFGDRVKHWITLNEPWVVAIVGHLYGVHAPGMKDIYVAFHTVHNLLRAHAKSVKVFRETVKDGKIGIVFNNGYFEPASEREEDIRAARFMHQFNNYPLFLNPIYRGEYPDLVLEFAREYLPRNYEDDMEEIKQEIDFVGLNYYSGHMVKYDPNSPARVSFVERNLPKTAMGWEIVPEGIYWILKGVKEEYNPQEVYITENGAAFDDVVSEGGKVHDQNRIDYLRAHIEQVWRAIQDGVPLKGYFVWSLLDNFEWAEGYSKRFGIVYVDYNTQKRI</sequence>
<name>BGLA_THENE</name>
<protein>
    <recommendedName>
        <fullName evidence="1">1,4-beta-D-glucan glucohydrolase</fullName>
        <shortName evidence="1">Glucan glucohydrolase</shortName>
        <ecNumber evidence="1">3.2.1.74</ecNumber>
    </recommendedName>
    <alternativeName>
        <fullName>Beta-D-glucoside glucohydrolase</fullName>
    </alternativeName>
    <alternativeName>
        <fullName>Beta-glucosidase</fullName>
        <ecNumber evidence="1">3.2.1.21</ecNumber>
    </alternativeName>
    <alternativeName>
        <fullName>Glucan 1,4-beta-glucosidase</fullName>
    </alternativeName>
</protein>
<evidence type="ECO:0000250" key="1">
    <source>
        <dbReference type="UniProtKB" id="B9K7M5"/>
    </source>
</evidence>
<evidence type="ECO:0000255" key="2"/>
<evidence type="ECO:0000255" key="3">
    <source>
        <dbReference type="PROSITE-ProRule" id="PRU10055"/>
    </source>
</evidence>
<evidence type="ECO:0000305" key="4"/>
<reference key="1">
    <citation type="journal article" date="1993" name="Biochem. Biophys. Res. Commun.">
        <title>Cloning and expression in Escherichia coli of Thermotoga neapolitana genes coding for enzymes of carbohydrate substrate degradation.</title>
        <authorList>
            <person name="Dakhova O."/>
            <person name="Kurepina N."/>
            <person name="Zverlov V."/>
            <person name="Svetlichnyi V."/>
            <person name="Velikodvorskaya G."/>
        </authorList>
    </citation>
    <scope>NUCLEOTIDE SEQUENCE [GENOMIC DNA]</scope>
    <source>
        <strain>Z2706-MC24</strain>
    </source>
</reference>
<feature type="chain" id="PRO_0000063880" description="1,4-beta-D-glucan glucohydrolase">
    <location>
        <begin position="1"/>
        <end position="425"/>
    </location>
</feature>
<feature type="active site" description="Proton donor" evidence="2">
    <location>
        <position position="164"/>
    </location>
</feature>
<feature type="active site" description="Nucleophile" evidence="3">
    <location>
        <position position="349"/>
    </location>
</feature>
<feature type="non-terminal residue">
    <location>
        <position position="425"/>
    </location>
</feature>
<gene>
    <name type="primary">bglA</name>
    <name type="synonym">gghA</name>
</gene>
<comment type="function">
    <text evidence="1">Broad substrate specificity glycosidase. Releases glucose from soluble glucooligomers, with a preference for longer oligomers; acts more readily on cellotetraose than on cellobiose. Displays similar activities towards the disaccharides lactose and cellobiose. Is also able to hydrolyze various aryl-beta-glycosides in vitro.</text>
</comment>
<comment type="catalytic activity">
    <reaction evidence="1">
        <text>Hydrolysis of (1-&gt;4)-linkages in (1-&gt;4)-beta-D-glucans, to remove successive glucose units.</text>
        <dbReference type="EC" id="3.2.1.74"/>
    </reaction>
</comment>
<comment type="catalytic activity">
    <reaction evidence="1">
        <text>Hydrolysis of terminal, non-reducing beta-D-glucosyl residues with release of beta-D-glucose.</text>
        <dbReference type="EC" id="3.2.1.21"/>
    </reaction>
</comment>
<comment type="pathway">
    <text evidence="1">Glycan metabolism; cellulose degradation.</text>
</comment>
<comment type="pathway">
    <text evidence="1">Glycan metabolism; beta-D-glucan degradation.</text>
</comment>
<comment type="subunit">
    <text evidence="1">Monomer.</text>
</comment>
<comment type="similarity">
    <text evidence="4">Belongs to the glycosyl hydrolase 1 family.</text>
</comment>
<keyword id="KW-0119">Carbohydrate metabolism</keyword>
<keyword id="KW-0136">Cellulose degradation</keyword>
<keyword id="KW-0326">Glycosidase</keyword>
<keyword id="KW-0378">Hydrolase</keyword>
<keyword id="KW-0624">Polysaccharide degradation</keyword>
<proteinExistence type="inferred from homology"/>